<reference key="1">
    <citation type="journal article" date="2005" name="J. Bacteriol.">
        <title>Whole-genome sequence analysis of Pseudomonas syringae pv. phaseolicola 1448A reveals divergence among pathovars in genes involved in virulence and transposition.</title>
        <authorList>
            <person name="Joardar V."/>
            <person name="Lindeberg M."/>
            <person name="Jackson R.W."/>
            <person name="Selengut J."/>
            <person name="Dodson R."/>
            <person name="Brinkac L.M."/>
            <person name="Daugherty S.C."/>
            <person name="DeBoy R.T."/>
            <person name="Durkin A.S."/>
            <person name="Gwinn Giglio M."/>
            <person name="Madupu R."/>
            <person name="Nelson W.C."/>
            <person name="Rosovitz M.J."/>
            <person name="Sullivan S.A."/>
            <person name="Crabtree J."/>
            <person name="Creasy T."/>
            <person name="Davidsen T.M."/>
            <person name="Haft D.H."/>
            <person name="Zafar N."/>
            <person name="Zhou L."/>
            <person name="Halpin R."/>
            <person name="Holley T."/>
            <person name="Khouri H.M."/>
            <person name="Feldblyum T.V."/>
            <person name="White O."/>
            <person name="Fraser C.M."/>
            <person name="Chatterjee A.K."/>
            <person name="Cartinhour S."/>
            <person name="Schneider D."/>
            <person name="Mansfield J.W."/>
            <person name="Collmer A."/>
            <person name="Buell R."/>
        </authorList>
    </citation>
    <scope>NUCLEOTIDE SEQUENCE [LARGE SCALE GENOMIC DNA]</scope>
    <source>
        <strain>1448A / Race 6</strain>
    </source>
</reference>
<feature type="chain" id="PRO_1000065193" description="Regulatory protein RecX">
    <location>
        <begin position="1"/>
        <end position="155"/>
    </location>
</feature>
<organism>
    <name type="scientific">Pseudomonas savastanoi pv. phaseolicola (strain 1448A / Race 6)</name>
    <name type="common">Pseudomonas syringae pv. phaseolicola (strain 1448A / Race 6)</name>
    <dbReference type="NCBI Taxonomy" id="264730"/>
    <lineage>
        <taxon>Bacteria</taxon>
        <taxon>Pseudomonadati</taxon>
        <taxon>Pseudomonadota</taxon>
        <taxon>Gammaproteobacteria</taxon>
        <taxon>Pseudomonadales</taxon>
        <taxon>Pseudomonadaceae</taxon>
        <taxon>Pseudomonas</taxon>
    </lineage>
</organism>
<protein>
    <recommendedName>
        <fullName evidence="1">Regulatory protein RecX</fullName>
    </recommendedName>
</protein>
<evidence type="ECO:0000255" key="1">
    <source>
        <dbReference type="HAMAP-Rule" id="MF_01114"/>
    </source>
</evidence>
<proteinExistence type="inferred from homology"/>
<comment type="function">
    <text evidence="1">Modulates RecA activity.</text>
</comment>
<comment type="subcellular location">
    <subcellularLocation>
        <location evidence="1">Cytoplasm</location>
    </subcellularLocation>
</comment>
<comment type="similarity">
    <text evidence="1">Belongs to the RecX family.</text>
</comment>
<name>RECX_PSE14</name>
<keyword id="KW-0963">Cytoplasm</keyword>
<accession>Q48F95</accession>
<sequence length="155" mass="17827">MPVVLDTPVAVRRTAMDLLARREHGRVELTRKLRQRGAPPELIDAALDRLVEEGLLSESRYLESFVSYRARSGYGPVRIREELNQRGLQRADIEQALRECGIDWQEKLHELWQRKFAGALPVDARERARQGRFLSYRGYPLDMIGRLLSGRGGDD</sequence>
<gene>
    <name evidence="1" type="primary">recX</name>
    <name type="ordered locus">PSPPH_3804</name>
</gene>
<dbReference type="EMBL" id="CP000058">
    <property type="protein sequence ID" value="AAZ37574.1"/>
    <property type="molecule type" value="Genomic_DNA"/>
</dbReference>
<dbReference type="RefSeq" id="WP_004657924.1">
    <property type="nucleotide sequence ID" value="NC_005773.3"/>
</dbReference>
<dbReference type="SMR" id="Q48F95"/>
<dbReference type="KEGG" id="psp:PSPPH_3804"/>
<dbReference type="eggNOG" id="COG2137">
    <property type="taxonomic scope" value="Bacteria"/>
</dbReference>
<dbReference type="HOGENOM" id="CLU_066607_3_2_6"/>
<dbReference type="Proteomes" id="UP000000551">
    <property type="component" value="Chromosome"/>
</dbReference>
<dbReference type="GO" id="GO:0005737">
    <property type="term" value="C:cytoplasm"/>
    <property type="evidence" value="ECO:0007669"/>
    <property type="project" value="UniProtKB-SubCell"/>
</dbReference>
<dbReference type="GO" id="GO:0006282">
    <property type="term" value="P:regulation of DNA repair"/>
    <property type="evidence" value="ECO:0007669"/>
    <property type="project" value="UniProtKB-UniRule"/>
</dbReference>
<dbReference type="FunFam" id="1.10.10.10:FF:000134">
    <property type="entry name" value="Regulatory protein RecX"/>
    <property type="match status" value="1"/>
</dbReference>
<dbReference type="Gene3D" id="1.10.10.10">
    <property type="entry name" value="Winged helix-like DNA-binding domain superfamily/Winged helix DNA-binding domain"/>
    <property type="match status" value="3"/>
</dbReference>
<dbReference type="HAMAP" id="MF_01114">
    <property type="entry name" value="RecX"/>
    <property type="match status" value="1"/>
</dbReference>
<dbReference type="InterPro" id="IPR053926">
    <property type="entry name" value="RecX_HTH_1st"/>
</dbReference>
<dbReference type="InterPro" id="IPR053924">
    <property type="entry name" value="RecX_HTH_2nd"/>
</dbReference>
<dbReference type="InterPro" id="IPR053925">
    <property type="entry name" value="RecX_HTH_3rd"/>
</dbReference>
<dbReference type="InterPro" id="IPR003783">
    <property type="entry name" value="Regulatory_RecX"/>
</dbReference>
<dbReference type="InterPro" id="IPR036388">
    <property type="entry name" value="WH-like_DNA-bd_sf"/>
</dbReference>
<dbReference type="NCBIfam" id="NF001054">
    <property type="entry name" value="PRK00117.2-1"/>
    <property type="match status" value="1"/>
</dbReference>
<dbReference type="PANTHER" id="PTHR33602">
    <property type="entry name" value="REGULATORY PROTEIN RECX FAMILY PROTEIN"/>
    <property type="match status" value="1"/>
</dbReference>
<dbReference type="PANTHER" id="PTHR33602:SF1">
    <property type="entry name" value="REGULATORY PROTEIN RECX FAMILY PROTEIN"/>
    <property type="match status" value="1"/>
</dbReference>
<dbReference type="Pfam" id="PF21982">
    <property type="entry name" value="RecX_HTH1"/>
    <property type="match status" value="1"/>
</dbReference>
<dbReference type="Pfam" id="PF02631">
    <property type="entry name" value="RecX_HTH2"/>
    <property type="match status" value="1"/>
</dbReference>
<dbReference type="Pfam" id="PF21981">
    <property type="entry name" value="RecX_HTH3"/>
    <property type="match status" value="1"/>
</dbReference>